<comment type="function">
    <text evidence="5 6 7 9 11">RNA helicase involved in group II intron splicing (PubMed:26147377). Essential protein required during embryogenesis. Involved in post-transcriptional gene silencing. Modulates the determination of cell fate. Necessary for normal plasmodesmata (PD) development and aperture regulation.</text>
</comment>
<comment type="catalytic activity">
    <reaction>
        <text>ATP + H2O = ADP + phosphate + H(+)</text>
        <dbReference type="Rhea" id="RHEA:13065"/>
        <dbReference type="ChEBI" id="CHEBI:15377"/>
        <dbReference type="ChEBI" id="CHEBI:15378"/>
        <dbReference type="ChEBI" id="CHEBI:30616"/>
        <dbReference type="ChEBI" id="CHEBI:43474"/>
        <dbReference type="ChEBI" id="CHEBI:456216"/>
        <dbReference type="EC" id="3.6.4.13"/>
    </reaction>
</comment>
<comment type="subcellular location">
    <subcellularLocation>
        <location evidence="8 10 11">Plastid</location>
        <location evidence="8 10 11">Chloroplast</location>
    </subcellularLocation>
    <subcellularLocation>
        <location evidence="7">Cytoplasmic granule</location>
    </subcellularLocation>
    <text evidence="7">Localizes to granule-like structures, probably stress granules (SGs), which number increases upon stress.</text>
</comment>
<comment type="disruption phenotype">
    <text evidence="5 6 9 10">Embryogenesis arrested at cotyledon stage. Altered size exclusion limit of PD; abnormally maintained dilated PD at the torpedo stage, and increased formation of secondary branched PD. Chlorosis. Altered plastid development.</text>
</comment>
<comment type="similarity">
    <text evidence="12">Belongs to the DExH box helicase family.</text>
</comment>
<comment type="sequence caution" evidence="12">
    <conflict type="erroneous gene model prediction">
        <sequence resource="EMBL-CDS" id="AAB61106"/>
    </conflict>
</comment>
<name>ISE2_ARATH</name>
<gene>
    <name type="primary">ISE2</name>
    <name type="synonym">EMB25</name>
    <name type="synonym">PDE317</name>
    <name type="ordered locus">At1g70070</name>
    <name type="ORF">F20P5.20</name>
</gene>
<accession>B9DFG3</accession>
<accession>O04538</accession>
<accession>Q94EZ6</accession>
<keyword id="KW-0067">ATP-binding</keyword>
<keyword id="KW-0150">Chloroplast</keyword>
<keyword id="KW-0347">Helicase</keyword>
<keyword id="KW-0378">Hydrolase</keyword>
<keyword id="KW-0507">mRNA processing</keyword>
<keyword id="KW-0508">mRNA splicing</keyword>
<keyword id="KW-0547">Nucleotide-binding</keyword>
<keyword id="KW-0934">Plastid</keyword>
<keyword id="KW-1185">Reference proteome</keyword>
<keyword id="KW-0694">RNA-binding</keyword>
<keyword id="KW-0943">RNA-mediated gene silencing</keyword>
<keyword id="KW-0809">Transit peptide</keyword>
<feature type="transit peptide" description="Chloroplast" evidence="1">
    <location>
        <begin position="1"/>
        <end position="58"/>
    </location>
</feature>
<feature type="chain" id="PRO_0000395028" description="DExH-box ATP-dependent RNA helicase DExH15 chloroplastic">
    <location>
        <begin position="59"/>
        <end position="1171"/>
    </location>
</feature>
<feature type="domain" description="Helicase ATP-binding" evidence="2">
    <location>
        <begin position="163"/>
        <end position="327"/>
    </location>
</feature>
<feature type="domain" description="Helicase C-terminal" evidence="3">
    <location>
        <begin position="424"/>
        <end position="620"/>
    </location>
</feature>
<feature type="region of interest" description="Disordered" evidence="4">
    <location>
        <begin position="53"/>
        <end position="111"/>
    </location>
</feature>
<feature type="short sequence motif" description="DEVH box" evidence="12">
    <location>
        <begin position="275"/>
        <end position="278"/>
    </location>
</feature>
<feature type="compositionally biased region" description="Polar residues" evidence="4">
    <location>
        <begin position="53"/>
        <end position="62"/>
    </location>
</feature>
<feature type="compositionally biased region" description="Acidic residues" evidence="4">
    <location>
        <begin position="63"/>
        <end position="90"/>
    </location>
</feature>
<feature type="compositionally biased region" description="Acidic residues" evidence="4">
    <location>
        <begin position="97"/>
        <end position="107"/>
    </location>
</feature>
<feature type="binding site" evidence="2">
    <location>
        <begin position="176"/>
        <end position="183"/>
    </location>
    <ligand>
        <name>ATP</name>
        <dbReference type="ChEBI" id="CHEBI:30616"/>
    </ligand>
</feature>
<feature type="mutagenesis site" description="In emb25, ise2-2; embryo development arrested at cotyledon stage, abnormal PD regulation end development." evidence="7">
    <original>D</original>
    <variation>N</variation>
    <location>
        <position position="275"/>
    </location>
</feature>
<feature type="sequence conflict" description="In Ref. 4; AAK62452." evidence="12" ref="4">
    <original>A</original>
    <variation>D</variation>
    <location>
        <position position="234"/>
    </location>
</feature>
<feature type="sequence conflict" description="In Ref. 3; BAH19480." evidence="12" ref="3">
    <original>D</original>
    <variation>N</variation>
    <location>
        <position position="395"/>
    </location>
</feature>
<proteinExistence type="evidence at protein level"/>
<sequence>MNTLPVVSLTASSSFKFFHFPSLHRSLSHSPNFSFTKSLILNPNHLSFKSTLNSLSPSQSQLYEEEDDEEEEEEDEDDDDEAADEYDNISDEIRNSDDDDDDEETEFSVDLPTESARERVEFRWQRVEKLRSLVRDFGVEMIDIDELISIYDFRIDKFQRLAIEAFLRGSSVVVSAPTSSGKTLIAEAAAVSTVAKGRRLFYTTPLKALSNQKFREFRETFGDDNVGLLTGDSAINKDAQIVIMTTEILRNMLYQSVGMASSGTGLFHVDAIVLDEVHYLSDISRGTVWEEIVIYCPKEVQLICLSATVANPDELAGWIGEIHGKTELVTSTRRPVPLTWYFSTKHSLLPLLDEKGINVNRKLSLNYLQLSASEARFRDDDDGYRKRRSKKRGGDTSYNNLVNVTDYPLSKNEINKIRRSQVPQISDTLWHLQGKNMLPAIWFIFNRRGCDAAVQYVENFQLLDDCEKSEVELALKKFRVLYPDAVRESAEKGLLRGIAAHHAGCLPLWKSFIEELFQRGLVKVVFATETLAAGINMPARTAVISSLSKKAGNERIELGPNELYQMAGRAGRRGIDEKGYTVLVQTAFEGAEECCKLVFAGVKPLVSQFTASYGMVLNLVAGSKVTRKSSGTEAGKVLQAGRSLEEAKKLVEKSFGNYVSSNVTVAAKQELAEIDNKIEILSSEISDEAIDKKSRKLLSARDYKEITVLKEELREEKRKRAEQRRRMELERFLALKPLLKGMEEGNLPFICLEFKDSEGREQSVPAVYLGHIDSFQGSKLQKMMSLDESFALNLIEDELAADEPGKPNVKPSYYVALGSDNSWYLFTEKWVRTVYRTGFPNIALALGDALPREIMKNLLDKADMQWDKLAESELGSLWRLEGSLETWSWSLNVPVLSSLSDEDEVLHMSEEYDNAAQKYKEQRSKISRLKKKMSRSEGFREYKKILENANLTVEKMKRLKARSRRLINRLEQIEPSGWKDFMRISNVIHESRALDINTHLIFPLGETAAAIRGENELWLAMVLRNKALVDLKPPQLAGVCASLVSEGIKVRPWRDNNYIYEPSDTVVDMVNFLEDQRSSLIKLQEKHEVMIPCCLDVQFSGMVEAWASGLSWKEMMMECAMDEGDLARLLRRTIDLLAQIPKLPDIDPVLQRSAAAAADIMDRPPISELAG</sequence>
<evidence type="ECO:0000255" key="1"/>
<evidence type="ECO:0000255" key="2">
    <source>
        <dbReference type="PROSITE-ProRule" id="PRU00541"/>
    </source>
</evidence>
<evidence type="ECO:0000255" key="3">
    <source>
        <dbReference type="PROSITE-ProRule" id="PRU00542"/>
    </source>
</evidence>
<evidence type="ECO:0000256" key="4">
    <source>
        <dbReference type="SAM" id="MobiDB-lite"/>
    </source>
</evidence>
<evidence type="ECO:0000269" key="5">
    <source>
    </source>
</evidence>
<evidence type="ECO:0000269" key="6">
    <source>
    </source>
</evidence>
<evidence type="ECO:0000269" key="7">
    <source>
    </source>
</evidence>
<evidence type="ECO:0000269" key="8">
    <source>
    </source>
</evidence>
<evidence type="ECO:0000269" key="9">
    <source>
    </source>
</evidence>
<evidence type="ECO:0000269" key="10">
    <source>
    </source>
</evidence>
<evidence type="ECO:0000269" key="11">
    <source>
    </source>
</evidence>
<evidence type="ECO:0000305" key="12"/>
<organism>
    <name type="scientific">Arabidopsis thaliana</name>
    <name type="common">Mouse-ear cress</name>
    <dbReference type="NCBI Taxonomy" id="3702"/>
    <lineage>
        <taxon>Eukaryota</taxon>
        <taxon>Viridiplantae</taxon>
        <taxon>Streptophyta</taxon>
        <taxon>Embryophyta</taxon>
        <taxon>Tracheophyta</taxon>
        <taxon>Spermatophyta</taxon>
        <taxon>Magnoliopsida</taxon>
        <taxon>eudicotyledons</taxon>
        <taxon>Gunneridae</taxon>
        <taxon>Pentapetalae</taxon>
        <taxon>rosids</taxon>
        <taxon>malvids</taxon>
        <taxon>Brassicales</taxon>
        <taxon>Brassicaceae</taxon>
        <taxon>Camelineae</taxon>
        <taxon>Arabidopsis</taxon>
    </lineage>
</organism>
<reference key="1">
    <citation type="journal article" date="2000" name="Nature">
        <title>Sequence and analysis of chromosome 1 of the plant Arabidopsis thaliana.</title>
        <authorList>
            <person name="Theologis A."/>
            <person name="Ecker J.R."/>
            <person name="Palm C.J."/>
            <person name="Federspiel N.A."/>
            <person name="Kaul S."/>
            <person name="White O."/>
            <person name="Alonso J."/>
            <person name="Altafi H."/>
            <person name="Araujo R."/>
            <person name="Bowman C.L."/>
            <person name="Brooks S.Y."/>
            <person name="Buehler E."/>
            <person name="Chan A."/>
            <person name="Chao Q."/>
            <person name="Chen H."/>
            <person name="Cheuk R.F."/>
            <person name="Chin C.W."/>
            <person name="Chung M.K."/>
            <person name="Conn L."/>
            <person name="Conway A.B."/>
            <person name="Conway A.R."/>
            <person name="Creasy T.H."/>
            <person name="Dewar K."/>
            <person name="Dunn P."/>
            <person name="Etgu P."/>
            <person name="Feldblyum T.V."/>
            <person name="Feng J.-D."/>
            <person name="Fong B."/>
            <person name="Fujii C.Y."/>
            <person name="Gill J.E."/>
            <person name="Goldsmith A.D."/>
            <person name="Haas B."/>
            <person name="Hansen N.F."/>
            <person name="Hughes B."/>
            <person name="Huizar L."/>
            <person name="Hunter J.L."/>
            <person name="Jenkins J."/>
            <person name="Johnson-Hopson C."/>
            <person name="Khan S."/>
            <person name="Khaykin E."/>
            <person name="Kim C.J."/>
            <person name="Koo H.L."/>
            <person name="Kremenetskaia I."/>
            <person name="Kurtz D.B."/>
            <person name="Kwan A."/>
            <person name="Lam B."/>
            <person name="Langin-Hooper S."/>
            <person name="Lee A."/>
            <person name="Lee J.M."/>
            <person name="Lenz C.A."/>
            <person name="Li J.H."/>
            <person name="Li Y.-P."/>
            <person name="Lin X."/>
            <person name="Liu S.X."/>
            <person name="Liu Z.A."/>
            <person name="Luros J.S."/>
            <person name="Maiti R."/>
            <person name="Marziali A."/>
            <person name="Militscher J."/>
            <person name="Miranda M."/>
            <person name="Nguyen M."/>
            <person name="Nierman W.C."/>
            <person name="Osborne B.I."/>
            <person name="Pai G."/>
            <person name="Peterson J."/>
            <person name="Pham P.K."/>
            <person name="Rizzo M."/>
            <person name="Rooney T."/>
            <person name="Rowley D."/>
            <person name="Sakano H."/>
            <person name="Salzberg S.L."/>
            <person name="Schwartz J.R."/>
            <person name="Shinn P."/>
            <person name="Southwick A.M."/>
            <person name="Sun H."/>
            <person name="Tallon L.J."/>
            <person name="Tambunga G."/>
            <person name="Toriumi M.J."/>
            <person name="Town C.D."/>
            <person name="Utterback T."/>
            <person name="Van Aken S."/>
            <person name="Vaysberg M."/>
            <person name="Vysotskaia V.S."/>
            <person name="Walker M."/>
            <person name="Wu D."/>
            <person name="Yu G."/>
            <person name="Fraser C.M."/>
            <person name="Venter J.C."/>
            <person name="Davis R.W."/>
        </authorList>
    </citation>
    <scope>NUCLEOTIDE SEQUENCE [LARGE SCALE GENOMIC DNA]</scope>
    <source>
        <strain>cv. Columbia</strain>
    </source>
</reference>
<reference key="2">
    <citation type="journal article" date="2017" name="Plant J.">
        <title>Araport11: a complete reannotation of the Arabidopsis thaliana reference genome.</title>
        <authorList>
            <person name="Cheng C.Y."/>
            <person name="Krishnakumar V."/>
            <person name="Chan A.P."/>
            <person name="Thibaud-Nissen F."/>
            <person name="Schobel S."/>
            <person name="Town C.D."/>
        </authorList>
    </citation>
    <scope>GENOME REANNOTATION</scope>
    <source>
        <strain>cv. Columbia</strain>
    </source>
</reference>
<reference key="3">
    <citation type="journal article" date="2009" name="DNA Res.">
        <title>Analysis of multiple occurrences of alternative splicing events in Arabidopsis thaliana using novel sequenced full-length cDNAs.</title>
        <authorList>
            <person name="Iida K."/>
            <person name="Fukami-Kobayashi K."/>
            <person name="Toyoda A."/>
            <person name="Sakaki Y."/>
            <person name="Kobayashi M."/>
            <person name="Seki M."/>
            <person name="Shinozaki K."/>
        </authorList>
    </citation>
    <scope>NUCLEOTIDE SEQUENCE [LARGE SCALE MRNA]</scope>
    <source>
        <strain>cv. Columbia</strain>
    </source>
</reference>
<reference key="4">
    <citation type="journal article" date="2003" name="Science">
        <title>Empirical analysis of transcriptional activity in the Arabidopsis genome.</title>
        <authorList>
            <person name="Yamada K."/>
            <person name="Lim J."/>
            <person name="Dale J.M."/>
            <person name="Chen H."/>
            <person name="Shinn P."/>
            <person name="Palm C.J."/>
            <person name="Southwick A.M."/>
            <person name="Wu H.C."/>
            <person name="Kim C.J."/>
            <person name="Nguyen M."/>
            <person name="Pham P.K."/>
            <person name="Cheuk R.F."/>
            <person name="Karlin-Newmann G."/>
            <person name="Liu S.X."/>
            <person name="Lam B."/>
            <person name="Sakano H."/>
            <person name="Wu T."/>
            <person name="Yu G."/>
            <person name="Miranda M."/>
            <person name="Quach H.L."/>
            <person name="Tripp M."/>
            <person name="Chang C.H."/>
            <person name="Lee J.M."/>
            <person name="Toriumi M.J."/>
            <person name="Chan M.M."/>
            <person name="Tang C.C."/>
            <person name="Onodera C.S."/>
            <person name="Deng J.M."/>
            <person name="Akiyama K."/>
            <person name="Ansari Y."/>
            <person name="Arakawa T."/>
            <person name="Banh J."/>
            <person name="Banno F."/>
            <person name="Bowser L."/>
            <person name="Brooks S.Y."/>
            <person name="Carninci P."/>
            <person name="Chao Q."/>
            <person name="Choy N."/>
            <person name="Enju A."/>
            <person name="Goldsmith A.D."/>
            <person name="Gurjal M."/>
            <person name="Hansen N.F."/>
            <person name="Hayashizaki Y."/>
            <person name="Johnson-Hopson C."/>
            <person name="Hsuan V.W."/>
            <person name="Iida K."/>
            <person name="Karnes M."/>
            <person name="Khan S."/>
            <person name="Koesema E."/>
            <person name="Ishida J."/>
            <person name="Jiang P.X."/>
            <person name="Jones T."/>
            <person name="Kawai J."/>
            <person name="Kamiya A."/>
            <person name="Meyers C."/>
            <person name="Nakajima M."/>
            <person name="Narusaka M."/>
            <person name="Seki M."/>
            <person name="Sakurai T."/>
            <person name="Satou M."/>
            <person name="Tamse R."/>
            <person name="Vaysberg M."/>
            <person name="Wallender E.K."/>
            <person name="Wong C."/>
            <person name="Yamamura Y."/>
            <person name="Yuan S."/>
            <person name="Shinozaki K."/>
            <person name="Davis R.W."/>
            <person name="Theologis A."/>
            <person name="Ecker J.R."/>
        </authorList>
    </citation>
    <scope>NUCLEOTIDE SEQUENCE [LARGE SCALE MRNA] OF 1-916</scope>
    <source>
        <strain>cv. Columbia</strain>
    </source>
</reference>
<reference key="5">
    <citation type="journal article" date="2001" name="Genetics">
        <title>Insertional mutagenesis of genes required for seed development in Arabidopsis thaliana.</title>
        <authorList>
            <person name="McElver J."/>
            <person name="Tzafrir I."/>
            <person name="Aux G."/>
            <person name="Rogers R."/>
            <person name="Ashby C."/>
            <person name="Smith K."/>
            <person name="Thomas C."/>
            <person name="Schetter A."/>
            <person name="Zhou Q."/>
            <person name="Cushman M.A."/>
            <person name="Tossberg J."/>
            <person name="Nickle T."/>
            <person name="Levin J.Z."/>
            <person name="Law M."/>
            <person name="Meinke D."/>
            <person name="Patton D."/>
        </authorList>
    </citation>
    <scope>FUNCTION</scope>
    <scope>DISRUPTION PHENOTYPE</scope>
</reference>
<reference key="6">
    <citation type="journal article" date="2002" name="Development">
        <title>Identification of a developmental transition in plasmodesmatal function during embryogenesis in Arabidopsis thaliana.</title>
        <authorList>
            <person name="Kim I."/>
            <person name="Hempel F.D."/>
            <person name="Sha K."/>
            <person name="Pfluger J."/>
            <person name="Zambryski P.C."/>
        </authorList>
    </citation>
    <scope>FUNCTION</scope>
    <scope>DISRUPTION PHENOTYPE</scope>
</reference>
<reference key="7">
    <citation type="journal article" date="2007" name="Plant Cell">
        <title>INCREASED SIZE EXCLUSION LIMIT 2 encodes a putative DEVH box RNA helicase involved in plasmodesmata function during Arabidopsis embryogenesis.</title>
        <authorList>
            <person name="Kobayashi K."/>
            <person name="Otegui M.S."/>
            <person name="Krishnakumar S."/>
            <person name="Mindrinos M."/>
            <person name="Zambryski P."/>
        </authorList>
    </citation>
    <scope>FUNCTION</scope>
    <scope>SUBCELLULAR LOCATION</scope>
    <scope>MUTAGENESIS OF ASP-275</scope>
</reference>
<reference key="8">
    <citation type="journal article" date="2008" name="PLoS ONE">
        <title>Sorting signals, N-terminal modifications and abundance of the chloroplast proteome.</title>
        <authorList>
            <person name="Zybailov B."/>
            <person name="Rutschow H."/>
            <person name="Friso G."/>
            <person name="Rudella A."/>
            <person name="Emanuelsson O."/>
            <person name="Sun Q."/>
            <person name="van Wijk K.J."/>
        </authorList>
    </citation>
    <scope>IDENTIFICATION BY MASS SPECTROMETRY</scope>
    <scope>SUBCELLULAR LOCATION [LARGE SCALE ANALYSIS]</scope>
</reference>
<reference key="9">
    <citation type="journal article" date="2010" name="Curr. Biol.">
        <title>Plasmodesmata formation: poking holes in walls with ise.</title>
        <authorList>
            <person name="Lee D.K."/>
            <person name="Sieburth L.E."/>
        </authorList>
    </citation>
    <scope>REVIEW</scope>
</reference>
<reference key="10">
    <citation type="journal article" date="2010" name="Curr. Biol.">
        <title>Loss of INCREASED SIZE EXCLUSION LIMIT (ISE)1 or ISE2 increases the formation of secondary plasmodesmata.</title>
        <authorList>
            <person name="Burch-Smith T.-M."/>
            <person name="Zambryski P.C."/>
        </authorList>
    </citation>
    <scope>FUNCTION</scope>
    <scope>DISRUPTION PHENOTYPE</scope>
</reference>
<reference key="11">
    <citation type="journal article" date="2011" name="Proc. Natl. Acad. Sci. U.S.A.">
        <title>Organelle-nucleus cross-talk regulates plant intercellular communication via plasmodesmata.</title>
        <authorList>
            <person name="Burch-Smith T.M."/>
            <person name="Brunkard J.O."/>
            <person name="Choi Y.G."/>
            <person name="Zambryski P.C."/>
        </authorList>
    </citation>
    <scope>SUBCELLULAR LOCATION</scope>
    <scope>DISRUPTION PHENOTYPE</scope>
</reference>
<reference key="12">
    <citation type="journal article" date="2013" name="PLoS ONE">
        <title>Genome-wide comparative in silico analysis of the RNA helicase gene family in Zea mays and Glycine max: a comparison with Arabidopsis and Oryza sativa.</title>
        <authorList>
            <person name="Xu R."/>
            <person name="Zhang S."/>
            <person name="Huang J."/>
            <person name="Zheng C."/>
        </authorList>
    </citation>
    <scope>GENE FAMILY</scope>
</reference>
<reference key="13">
    <citation type="journal article" date="2016" name="Plant Cell Environ.">
        <title>The chloroplastic DEVH-box RNA helicase INCREASED SIZE EXCLUSION LIMIT 2 involved in plasmodesmata regulation is required for group II intron splicing.</title>
        <authorList>
            <person name="Carlotto N."/>
            <person name="Wirth S."/>
            <person name="Furman N."/>
            <person name="Ferreyra Solari N."/>
            <person name="Ariel F."/>
            <person name="Crespi M."/>
            <person name="Kobayashi K."/>
        </authorList>
    </citation>
    <scope>SUBCELLULAR LOCATION</scope>
    <scope>FUNCTION</scope>
</reference>
<protein>
    <recommendedName>
        <fullName evidence="12">DExH-box ATP-dependent RNA helicase DExH15 chloroplastic</fullName>
        <ecNumber>3.6.4.13</ecNumber>
    </recommendedName>
    <alternativeName>
        <fullName>ATP-dependent RNA helicase ISE2</fullName>
    </alternativeName>
    <alternativeName>
        <fullName>Protein EMBRYO DEFECTIVE 25</fullName>
    </alternativeName>
    <alternativeName>
        <fullName>Protein INCREASED SIZE EXCLUSION LIMIT 2</fullName>
    </alternativeName>
    <alternativeName>
        <fullName>Protein PIGMENT DEFECTIVE 317</fullName>
    </alternativeName>
</protein>
<dbReference type="EC" id="3.6.4.13"/>
<dbReference type="EMBL" id="AC002062">
    <property type="protein sequence ID" value="AAB61106.1"/>
    <property type="status" value="ALT_SEQ"/>
    <property type="molecule type" value="Genomic_DNA"/>
</dbReference>
<dbReference type="EMBL" id="CP002684">
    <property type="protein sequence ID" value="AEE35013.1"/>
    <property type="molecule type" value="Genomic_DNA"/>
</dbReference>
<dbReference type="EMBL" id="AK316759">
    <property type="protein sequence ID" value="BAH19480.1"/>
    <property type="molecule type" value="mRNA"/>
</dbReference>
<dbReference type="EMBL" id="AF387007">
    <property type="protein sequence ID" value="AAK62452.1"/>
    <property type="molecule type" value="mRNA"/>
</dbReference>
<dbReference type="PIR" id="D96723">
    <property type="entry name" value="D96723"/>
</dbReference>
<dbReference type="RefSeq" id="NP_177164.1">
    <property type="nucleotide sequence ID" value="NM_105675.2"/>
</dbReference>
<dbReference type="SMR" id="B9DFG3"/>
<dbReference type="BioGRID" id="28564">
    <property type="interactions" value="4"/>
</dbReference>
<dbReference type="FunCoup" id="B9DFG3">
    <property type="interactions" value="835"/>
</dbReference>
<dbReference type="STRING" id="3702.B9DFG3"/>
<dbReference type="iPTMnet" id="B9DFG3"/>
<dbReference type="PaxDb" id="3702-AT1G70070.1"/>
<dbReference type="ProteomicsDB" id="228858"/>
<dbReference type="EnsemblPlants" id="AT1G70070.1">
    <property type="protein sequence ID" value="AT1G70070.1"/>
    <property type="gene ID" value="AT1G70070"/>
</dbReference>
<dbReference type="GeneID" id="843343"/>
<dbReference type="Gramene" id="AT1G70070.1">
    <property type="protein sequence ID" value="AT1G70070.1"/>
    <property type="gene ID" value="AT1G70070"/>
</dbReference>
<dbReference type="KEGG" id="ath:AT1G70070"/>
<dbReference type="Araport" id="AT1G70070"/>
<dbReference type="TAIR" id="AT1G70070">
    <property type="gene designation" value="EMB25"/>
</dbReference>
<dbReference type="eggNOG" id="KOG0947">
    <property type="taxonomic scope" value="Eukaryota"/>
</dbReference>
<dbReference type="HOGENOM" id="CLU_002902_4_0_1"/>
<dbReference type="InParanoid" id="B9DFG3"/>
<dbReference type="OMA" id="RRGCDKA"/>
<dbReference type="PhylomeDB" id="B9DFG3"/>
<dbReference type="BRENDA" id="3.6.4.13">
    <property type="organism ID" value="399"/>
</dbReference>
<dbReference type="PRO" id="PR:B9DFG3"/>
<dbReference type="Proteomes" id="UP000006548">
    <property type="component" value="Chromosome 1"/>
</dbReference>
<dbReference type="ExpressionAtlas" id="B9DFG3">
    <property type="expression patterns" value="baseline and differential"/>
</dbReference>
<dbReference type="GO" id="GO:0009507">
    <property type="term" value="C:chloroplast"/>
    <property type="evidence" value="ECO:0000314"/>
    <property type="project" value="UniProtKB"/>
</dbReference>
<dbReference type="GO" id="GO:0009570">
    <property type="term" value="C:chloroplast stroma"/>
    <property type="evidence" value="ECO:0007005"/>
    <property type="project" value="TAIR"/>
</dbReference>
<dbReference type="GO" id="GO:0010494">
    <property type="term" value="C:cytoplasmic stress granule"/>
    <property type="evidence" value="ECO:0000314"/>
    <property type="project" value="TAIR"/>
</dbReference>
<dbReference type="GO" id="GO:0005524">
    <property type="term" value="F:ATP binding"/>
    <property type="evidence" value="ECO:0007669"/>
    <property type="project" value="UniProtKB-KW"/>
</dbReference>
<dbReference type="GO" id="GO:0016887">
    <property type="term" value="F:ATP hydrolysis activity"/>
    <property type="evidence" value="ECO:0007669"/>
    <property type="project" value="RHEA"/>
</dbReference>
<dbReference type="GO" id="GO:0003729">
    <property type="term" value="F:mRNA binding"/>
    <property type="evidence" value="ECO:0000314"/>
    <property type="project" value="TAIR"/>
</dbReference>
<dbReference type="GO" id="GO:0003723">
    <property type="term" value="F:RNA binding"/>
    <property type="evidence" value="ECO:0000314"/>
    <property type="project" value="UniProtKB"/>
</dbReference>
<dbReference type="GO" id="GO:0003724">
    <property type="term" value="F:RNA helicase activity"/>
    <property type="evidence" value="ECO:0000250"/>
    <property type="project" value="TAIR"/>
</dbReference>
<dbReference type="GO" id="GO:1901259">
    <property type="term" value="P:chloroplast rRNA processing"/>
    <property type="evidence" value="ECO:0000315"/>
    <property type="project" value="CACAO"/>
</dbReference>
<dbReference type="GO" id="GO:0016554">
    <property type="term" value="P:cytidine to uridine editing"/>
    <property type="evidence" value="ECO:0000315"/>
    <property type="project" value="CACAO"/>
</dbReference>
<dbReference type="GO" id="GO:0009793">
    <property type="term" value="P:embryo development ending in seed dormancy"/>
    <property type="evidence" value="ECO:0000315"/>
    <property type="project" value="TAIR"/>
</dbReference>
<dbReference type="GO" id="GO:0000373">
    <property type="term" value="P:Group II intron splicing"/>
    <property type="evidence" value="ECO:0000315"/>
    <property type="project" value="UniProtKB"/>
</dbReference>
<dbReference type="GO" id="GO:0006397">
    <property type="term" value="P:mRNA processing"/>
    <property type="evidence" value="ECO:0000315"/>
    <property type="project" value="UniProtKB"/>
</dbReference>
<dbReference type="GO" id="GO:0010497">
    <property type="term" value="P:plasmodesmata-mediated intercellular transport"/>
    <property type="evidence" value="ECO:0000315"/>
    <property type="project" value="TAIR"/>
</dbReference>
<dbReference type="GO" id="GO:0016441">
    <property type="term" value="P:post-transcriptional gene silencing"/>
    <property type="evidence" value="ECO:0000315"/>
    <property type="project" value="TAIR"/>
</dbReference>
<dbReference type="GO" id="GO:0031047">
    <property type="term" value="P:regulatory ncRNA-mediated gene silencing"/>
    <property type="evidence" value="ECO:0007669"/>
    <property type="project" value="UniProtKB-KW"/>
</dbReference>
<dbReference type="CDD" id="cd18795">
    <property type="entry name" value="SF2_C_Ski2"/>
    <property type="match status" value="1"/>
</dbReference>
<dbReference type="FunFam" id="3.40.50.300:FF:000190">
    <property type="entry name" value="ATP-dependent RNA helicase"/>
    <property type="match status" value="1"/>
</dbReference>
<dbReference type="FunFam" id="1.10.3380.30:FF:000007">
    <property type="entry name" value="DExH-box ATP-dependent RNA helicase DExH15 chloroplastic"/>
    <property type="match status" value="1"/>
</dbReference>
<dbReference type="FunFam" id="3.40.50.300:FF:001182">
    <property type="entry name" value="DExH-box ATP-dependent RNA helicase DExH15 chloroplastic"/>
    <property type="match status" value="1"/>
</dbReference>
<dbReference type="Gene3D" id="1.10.3380.30">
    <property type="match status" value="1"/>
</dbReference>
<dbReference type="Gene3D" id="3.40.50.300">
    <property type="entry name" value="P-loop containing nucleotide triphosphate hydrolases"/>
    <property type="match status" value="2"/>
</dbReference>
<dbReference type="InterPro" id="IPR011545">
    <property type="entry name" value="DEAD/DEAH_box_helicase_dom"/>
</dbReference>
<dbReference type="InterPro" id="IPR014001">
    <property type="entry name" value="Helicase_ATP-bd"/>
</dbReference>
<dbReference type="InterPro" id="IPR001650">
    <property type="entry name" value="Helicase_C-like"/>
</dbReference>
<dbReference type="InterPro" id="IPR027417">
    <property type="entry name" value="P-loop_NTPase"/>
</dbReference>
<dbReference type="InterPro" id="IPR050699">
    <property type="entry name" value="RNA-DNA_Helicase"/>
</dbReference>
<dbReference type="InterPro" id="IPR012961">
    <property type="entry name" value="Ski2/MTR4_C"/>
</dbReference>
<dbReference type="PANTHER" id="PTHR12131">
    <property type="entry name" value="ATP-DEPENDENT RNA AND DNA HELICASE"/>
    <property type="match status" value="1"/>
</dbReference>
<dbReference type="PANTHER" id="PTHR12131:SF1">
    <property type="entry name" value="ATP-DEPENDENT RNA HELICASE SUPV3L1, MITOCHONDRIAL-RELATED"/>
    <property type="match status" value="1"/>
</dbReference>
<dbReference type="Pfam" id="PF00270">
    <property type="entry name" value="DEAD"/>
    <property type="match status" value="1"/>
</dbReference>
<dbReference type="Pfam" id="PF08148">
    <property type="entry name" value="DSHCT"/>
    <property type="match status" value="1"/>
</dbReference>
<dbReference type="Pfam" id="PF00271">
    <property type="entry name" value="Helicase_C"/>
    <property type="match status" value="1"/>
</dbReference>
<dbReference type="Pfam" id="PF25446">
    <property type="entry name" value="SH3_ISE2"/>
    <property type="match status" value="1"/>
</dbReference>
<dbReference type="SMART" id="SM00487">
    <property type="entry name" value="DEXDc"/>
    <property type="match status" value="1"/>
</dbReference>
<dbReference type="SMART" id="SM01142">
    <property type="entry name" value="DSHCT"/>
    <property type="match status" value="1"/>
</dbReference>
<dbReference type="SMART" id="SM00490">
    <property type="entry name" value="HELICc"/>
    <property type="match status" value="1"/>
</dbReference>
<dbReference type="SUPFAM" id="SSF52540">
    <property type="entry name" value="P-loop containing nucleoside triphosphate hydrolases"/>
    <property type="match status" value="1"/>
</dbReference>
<dbReference type="PROSITE" id="PS51192">
    <property type="entry name" value="HELICASE_ATP_BIND_1"/>
    <property type="match status" value="1"/>
</dbReference>
<dbReference type="PROSITE" id="PS51194">
    <property type="entry name" value="HELICASE_CTER"/>
    <property type="match status" value="1"/>
</dbReference>